<keyword id="KW-0325">Glycoprotein</keyword>
<keyword id="KW-0333">Golgi apparatus</keyword>
<keyword id="KW-0472">Membrane</keyword>
<keyword id="KW-1185">Reference proteome</keyword>
<keyword id="KW-0812">Transmembrane</keyword>
<keyword id="KW-1133">Transmembrane helix</keyword>
<organism>
    <name type="scientific">Coccidioides immitis (strain RS)</name>
    <name type="common">Valley fever fungus</name>
    <dbReference type="NCBI Taxonomy" id="246410"/>
    <lineage>
        <taxon>Eukaryota</taxon>
        <taxon>Fungi</taxon>
        <taxon>Dikarya</taxon>
        <taxon>Ascomycota</taxon>
        <taxon>Pezizomycotina</taxon>
        <taxon>Eurotiomycetes</taxon>
        <taxon>Eurotiomycetidae</taxon>
        <taxon>Onygenales</taxon>
        <taxon>Onygenaceae</taxon>
        <taxon>Coccidioides</taxon>
    </lineage>
</organism>
<sequence length="146" mass="16027">MSLAEEFKSRNFSIYGQWTGVICIILSFAIGLASVFSRFIVFGIISLVYSPLLLFIEVPFLLRICPTSSKFDAFIRRFTTNFMRAAIYAAMSGGLWISLVIDPSSLIAVAVFLAIAGLFYLLAALMKQEFTSSKTLGGQGVAQMIV</sequence>
<evidence type="ECO:0000250" key="1"/>
<evidence type="ECO:0000255" key="2"/>
<evidence type="ECO:0000305" key="3"/>
<name>TVP18_COCIM</name>
<reference key="1">
    <citation type="journal article" date="2009" name="Genome Res.">
        <title>Comparative genomic analyses of the human fungal pathogens Coccidioides and their relatives.</title>
        <authorList>
            <person name="Sharpton T.J."/>
            <person name="Stajich J.E."/>
            <person name="Rounsley S.D."/>
            <person name="Gardner M.J."/>
            <person name="Wortman J.R."/>
            <person name="Jordar V.S."/>
            <person name="Maiti R."/>
            <person name="Kodira C.D."/>
            <person name="Neafsey D.E."/>
            <person name="Zeng Q."/>
            <person name="Hung C.-Y."/>
            <person name="McMahan C."/>
            <person name="Muszewska A."/>
            <person name="Grynberg M."/>
            <person name="Mandel M.A."/>
            <person name="Kellner E.M."/>
            <person name="Barker B.M."/>
            <person name="Galgiani J.N."/>
            <person name="Orbach M.J."/>
            <person name="Kirkland T.N."/>
            <person name="Cole G.T."/>
            <person name="Henn M.R."/>
            <person name="Birren B.W."/>
            <person name="Taylor J.W."/>
        </authorList>
    </citation>
    <scope>NUCLEOTIDE SEQUENCE [LARGE SCALE GENOMIC DNA]</scope>
    <source>
        <strain>RS</strain>
    </source>
</reference>
<reference key="2">
    <citation type="journal article" date="2010" name="Genome Res.">
        <title>Population genomic sequencing of Coccidioides fungi reveals recent hybridization and transposon control.</title>
        <authorList>
            <person name="Neafsey D.E."/>
            <person name="Barker B.M."/>
            <person name="Sharpton T.J."/>
            <person name="Stajich J.E."/>
            <person name="Park D.J."/>
            <person name="Whiston E."/>
            <person name="Hung C.-Y."/>
            <person name="McMahan C."/>
            <person name="White J."/>
            <person name="Sykes S."/>
            <person name="Heiman D."/>
            <person name="Young S."/>
            <person name="Zeng Q."/>
            <person name="Abouelleil A."/>
            <person name="Aftuck L."/>
            <person name="Bessette D."/>
            <person name="Brown A."/>
            <person name="FitzGerald M."/>
            <person name="Lui A."/>
            <person name="Macdonald J.P."/>
            <person name="Priest M."/>
            <person name="Orbach M.J."/>
            <person name="Galgiani J.N."/>
            <person name="Kirkland T.N."/>
            <person name="Cole G.T."/>
            <person name="Birren B.W."/>
            <person name="Henn M.R."/>
            <person name="Taylor J.W."/>
            <person name="Rounsley S.D."/>
        </authorList>
    </citation>
    <scope>GENOME REANNOTATION</scope>
    <source>
        <strain>RS</strain>
    </source>
</reference>
<accession>Q1E1E0</accession>
<accession>J3KC23</accession>
<comment type="function">
    <text evidence="1">Golgi membrane protein involved in vesicular trafficking.</text>
</comment>
<comment type="subcellular location">
    <subcellularLocation>
        <location evidence="1">Golgi apparatus membrane</location>
        <topology evidence="1">Multi-pass membrane protein</topology>
    </subcellularLocation>
</comment>
<comment type="similarity">
    <text evidence="3">Belongs to the TVP18 family.</text>
</comment>
<feature type="chain" id="PRO_0000343018" description="Golgi apparatus membrane protein TVP18">
    <location>
        <begin position="1"/>
        <end position="146"/>
    </location>
</feature>
<feature type="transmembrane region" description="Helical" evidence="2">
    <location>
        <begin position="16"/>
        <end position="36"/>
    </location>
</feature>
<feature type="transmembrane region" description="Helical" evidence="2">
    <location>
        <begin position="39"/>
        <end position="59"/>
    </location>
</feature>
<feature type="transmembrane region" description="Helical" evidence="2">
    <location>
        <begin position="82"/>
        <end position="101"/>
    </location>
</feature>
<feature type="transmembrane region" description="Helical" evidence="2">
    <location>
        <begin position="106"/>
        <end position="125"/>
    </location>
</feature>
<feature type="glycosylation site" description="N-linked (GlcNAc...) asparagine" evidence="2">
    <location>
        <position position="11"/>
    </location>
</feature>
<proteinExistence type="inferred from homology"/>
<dbReference type="EMBL" id="GG704916">
    <property type="protein sequence ID" value="EAS32599.3"/>
    <property type="molecule type" value="Genomic_DNA"/>
</dbReference>
<dbReference type="RefSeq" id="XP_001244182.1">
    <property type="nucleotide sequence ID" value="XM_001244181.2"/>
</dbReference>
<dbReference type="FunCoup" id="Q1E1E0">
    <property type="interactions" value="44"/>
</dbReference>
<dbReference type="STRING" id="246410.Q1E1E0"/>
<dbReference type="GlyCosmos" id="Q1E1E0">
    <property type="glycosylation" value="1 site, No reported glycans"/>
</dbReference>
<dbReference type="GeneID" id="4563641"/>
<dbReference type="KEGG" id="cim:CIMG_03623"/>
<dbReference type="VEuPathDB" id="FungiDB:CIMG_03623"/>
<dbReference type="InParanoid" id="Q1E1E0"/>
<dbReference type="OMA" id="IYAQWLG"/>
<dbReference type="OrthoDB" id="5591789at2759"/>
<dbReference type="Proteomes" id="UP000001261">
    <property type="component" value="Unassembled WGS sequence"/>
</dbReference>
<dbReference type="GO" id="GO:0000139">
    <property type="term" value="C:Golgi membrane"/>
    <property type="evidence" value="ECO:0007669"/>
    <property type="project" value="UniProtKB-SubCell"/>
</dbReference>
<dbReference type="GO" id="GO:0016192">
    <property type="term" value="P:vesicle-mediated transport"/>
    <property type="evidence" value="ECO:0007669"/>
    <property type="project" value="TreeGrafter"/>
</dbReference>
<dbReference type="InterPro" id="IPR019365">
    <property type="entry name" value="TVP18/Ca-channel_flower"/>
</dbReference>
<dbReference type="PANTHER" id="PTHR13314">
    <property type="entry name" value="CALCIUM CHANNEL FLOWER HOMOLOG"/>
    <property type="match status" value="1"/>
</dbReference>
<dbReference type="PANTHER" id="PTHR13314:SF2">
    <property type="entry name" value="CALCIUM CHANNEL FLOWER HOMOLOG"/>
    <property type="match status" value="1"/>
</dbReference>
<dbReference type="Pfam" id="PF10233">
    <property type="entry name" value="Cg6151-P"/>
    <property type="match status" value="1"/>
</dbReference>
<dbReference type="SMART" id="SM01077">
    <property type="entry name" value="Cg6151-P"/>
    <property type="match status" value="1"/>
</dbReference>
<protein>
    <recommendedName>
        <fullName>Golgi apparatus membrane protein TVP18</fullName>
    </recommendedName>
</protein>
<gene>
    <name type="primary">TVP18</name>
    <name type="ORF">CIMG_03623</name>
</gene>